<gene>
    <name evidence="1" type="primary">metN</name>
    <name type="ordered locus">PM1728</name>
</gene>
<dbReference type="EC" id="7.4.2.11" evidence="1"/>
<dbReference type="EMBL" id="AE004439">
    <property type="protein sequence ID" value="AAK03812.1"/>
    <property type="molecule type" value="Genomic_DNA"/>
</dbReference>
<dbReference type="RefSeq" id="WP_005718783.1">
    <property type="nucleotide sequence ID" value="NC_002663.1"/>
</dbReference>
<dbReference type="SMR" id="Q9CK97"/>
<dbReference type="STRING" id="272843.PM1728"/>
<dbReference type="EnsemblBacteria" id="AAK03812">
    <property type="protein sequence ID" value="AAK03812"/>
    <property type="gene ID" value="PM1728"/>
</dbReference>
<dbReference type="GeneID" id="77206657"/>
<dbReference type="KEGG" id="pmu:PM1728"/>
<dbReference type="PATRIC" id="fig|272843.6.peg.1749"/>
<dbReference type="HOGENOM" id="CLU_000604_1_3_6"/>
<dbReference type="OrthoDB" id="9802264at2"/>
<dbReference type="Proteomes" id="UP000000809">
    <property type="component" value="Chromosome"/>
</dbReference>
<dbReference type="GO" id="GO:0009276">
    <property type="term" value="C:Gram-negative-bacterium-type cell wall"/>
    <property type="evidence" value="ECO:0007669"/>
    <property type="project" value="InterPro"/>
</dbReference>
<dbReference type="GO" id="GO:0005886">
    <property type="term" value="C:plasma membrane"/>
    <property type="evidence" value="ECO:0007669"/>
    <property type="project" value="UniProtKB-SubCell"/>
</dbReference>
<dbReference type="GO" id="GO:0033232">
    <property type="term" value="F:ABC-type D-methionine transporter activity"/>
    <property type="evidence" value="ECO:0007669"/>
    <property type="project" value="UniProtKB-EC"/>
</dbReference>
<dbReference type="GO" id="GO:0005524">
    <property type="term" value="F:ATP binding"/>
    <property type="evidence" value="ECO:0007669"/>
    <property type="project" value="UniProtKB-KW"/>
</dbReference>
<dbReference type="GO" id="GO:0016887">
    <property type="term" value="F:ATP hydrolysis activity"/>
    <property type="evidence" value="ECO:0007669"/>
    <property type="project" value="InterPro"/>
</dbReference>
<dbReference type="CDD" id="cd03258">
    <property type="entry name" value="ABC_MetN_methionine_transporter"/>
    <property type="match status" value="1"/>
</dbReference>
<dbReference type="FunFam" id="3.40.50.300:FF:000233">
    <property type="entry name" value="Methionine import ATP-binding protein MetN"/>
    <property type="match status" value="1"/>
</dbReference>
<dbReference type="Gene3D" id="3.30.70.260">
    <property type="match status" value="1"/>
</dbReference>
<dbReference type="Gene3D" id="3.40.50.300">
    <property type="entry name" value="P-loop containing nucleotide triphosphate hydrolases"/>
    <property type="match status" value="1"/>
</dbReference>
<dbReference type="InterPro" id="IPR003593">
    <property type="entry name" value="AAA+_ATPase"/>
</dbReference>
<dbReference type="InterPro" id="IPR012692">
    <property type="entry name" value="ABC_MetN_proteobac"/>
</dbReference>
<dbReference type="InterPro" id="IPR003439">
    <property type="entry name" value="ABC_transporter-like_ATP-bd"/>
</dbReference>
<dbReference type="InterPro" id="IPR017871">
    <property type="entry name" value="ABC_transporter-like_CS"/>
</dbReference>
<dbReference type="InterPro" id="IPR045865">
    <property type="entry name" value="ACT-like_dom_sf"/>
</dbReference>
<dbReference type="InterPro" id="IPR041701">
    <property type="entry name" value="MetN_ABC"/>
</dbReference>
<dbReference type="InterPro" id="IPR050086">
    <property type="entry name" value="MetN_ABC_transporter-like"/>
</dbReference>
<dbReference type="InterPro" id="IPR018449">
    <property type="entry name" value="NIL_domain"/>
</dbReference>
<dbReference type="InterPro" id="IPR027417">
    <property type="entry name" value="P-loop_NTPase"/>
</dbReference>
<dbReference type="NCBIfam" id="TIGR02314">
    <property type="entry name" value="ABC_MetN"/>
    <property type="match status" value="1"/>
</dbReference>
<dbReference type="PANTHER" id="PTHR43166">
    <property type="entry name" value="AMINO ACID IMPORT ATP-BINDING PROTEIN"/>
    <property type="match status" value="1"/>
</dbReference>
<dbReference type="PANTHER" id="PTHR43166:SF30">
    <property type="entry name" value="METHIONINE IMPORT ATP-BINDING PROTEIN METN"/>
    <property type="match status" value="1"/>
</dbReference>
<dbReference type="Pfam" id="PF00005">
    <property type="entry name" value="ABC_tran"/>
    <property type="match status" value="1"/>
</dbReference>
<dbReference type="Pfam" id="PF09383">
    <property type="entry name" value="NIL"/>
    <property type="match status" value="1"/>
</dbReference>
<dbReference type="SMART" id="SM00382">
    <property type="entry name" value="AAA"/>
    <property type="match status" value="1"/>
</dbReference>
<dbReference type="SMART" id="SM00930">
    <property type="entry name" value="NIL"/>
    <property type="match status" value="1"/>
</dbReference>
<dbReference type="SUPFAM" id="SSF55021">
    <property type="entry name" value="ACT-like"/>
    <property type="match status" value="1"/>
</dbReference>
<dbReference type="SUPFAM" id="SSF52540">
    <property type="entry name" value="P-loop containing nucleoside triphosphate hydrolases"/>
    <property type="match status" value="1"/>
</dbReference>
<dbReference type="PROSITE" id="PS00211">
    <property type="entry name" value="ABC_TRANSPORTER_1"/>
    <property type="match status" value="1"/>
</dbReference>
<dbReference type="PROSITE" id="PS50893">
    <property type="entry name" value="ABC_TRANSPORTER_2"/>
    <property type="match status" value="1"/>
</dbReference>
<dbReference type="PROSITE" id="PS51264">
    <property type="entry name" value="METN"/>
    <property type="match status" value="1"/>
</dbReference>
<proteinExistence type="inferred from homology"/>
<feature type="chain" id="PRO_0000092510" description="Methionine import ATP-binding protein MetN">
    <location>
        <begin position="1"/>
        <end position="344"/>
    </location>
</feature>
<feature type="domain" description="ABC transporter" evidence="1">
    <location>
        <begin position="2"/>
        <end position="241"/>
    </location>
</feature>
<feature type="binding site" evidence="1">
    <location>
        <begin position="38"/>
        <end position="45"/>
    </location>
    <ligand>
        <name>ATP</name>
        <dbReference type="ChEBI" id="CHEBI:30616"/>
    </ligand>
</feature>
<keyword id="KW-0029">Amino-acid transport</keyword>
<keyword id="KW-0067">ATP-binding</keyword>
<keyword id="KW-0997">Cell inner membrane</keyword>
<keyword id="KW-1003">Cell membrane</keyword>
<keyword id="KW-0472">Membrane</keyword>
<keyword id="KW-0547">Nucleotide-binding</keyword>
<keyword id="KW-1185">Reference proteome</keyword>
<keyword id="KW-1278">Translocase</keyword>
<keyword id="KW-0813">Transport</keyword>
<reference key="1">
    <citation type="journal article" date="2001" name="Proc. Natl. Acad. Sci. U.S.A.">
        <title>Complete genomic sequence of Pasteurella multocida Pm70.</title>
        <authorList>
            <person name="May B.J."/>
            <person name="Zhang Q."/>
            <person name="Li L.L."/>
            <person name="Paustian M.L."/>
            <person name="Whittam T.S."/>
            <person name="Kapur V."/>
        </authorList>
    </citation>
    <scope>NUCLEOTIDE SEQUENCE [LARGE SCALE GENOMIC DNA]</scope>
    <source>
        <strain>Pm70</strain>
    </source>
</reference>
<protein>
    <recommendedName>
        <fullName evidence="1">Methionine import ATP-binding protein MetN</fullName>
        <ecNumber evidence="1">7.4.2.11</ecNumber>
    </recommendedName>
</protein>
<sequence length="344" mass="37792">MIKLEKISKIFDVSGKKLTALDNVSLHVPKGQICGVIGASGAGKSTLIRCVNLLETPSSGAVIVDGKDLTQLKNADLVHERRHIGMIFQHFNLLTSRTVFGNIALPLELENTPKEKIHQKVNELLALVGLTDKKDAYPSNLSGGQKQRVAIARALASEPKVLLCDEATSALDPATTQSILTLLKEINRTLGITILLITHEMEVVKRICDHVAVIDKGRLIEQGSVSEIFSNPQTQLAKEFIRSTFHISLPEEYMEKLTETPRNATSWPIVKFEFTGRTVDAPVLSQASKMFGVDLSILTSQIDYAGGVKFGFVIAEMEGDDEAITRTKTYLMEHNVKVEVLGYV</sequence>
<evidence type="ECO:0000255" key="1">
    <source>
        <dbReference type="HAMAP-Rule" id="MF_01719"/>
    </source>
</evidence>
<name>METN_PASMU</name>
<comment type="function">
    <text evidence="1">Part of the ABC transporter complex MetNIQ involved in methionine import. Responsible for energy coupling to the transport system.</text>
</comment>
<comment type="catalytic activity">
    <reaction evidence="1">
        <text>L-methionine(out) + ATP + H2O = L-methionine(in) + ADP + phosphate + H(+)</text>
        <dbReference type="Rhea" id="RHEA:29779"/>
        <dbReference type="ChEBI" id="CHEBI:15377"/>
        <dbReference type="ChEBI" id="CHEBI:15378"/>
        <dbReference type="ChEBI" id="CHEBI:30616"/>
        <dbReference type="ChEBI" id="CHEBI:43474"/>
        <dbReference type="ChEBI" id="CHEBI:57844"/>
        <dbReference type="ChEBI" id="CHEBI:456216"/>
        <dbReference type="EC" id="7.4.2.11"/>
    </reaction>
</comment>
<comment type="catalytic activity">
    <reaction evidence="1">
        <text>D-methionine(out) + ATP + H2O = D-methionine(in) + ADP + phosphate + H(+)</text>
        <dbReference type="Rhea" id="RHEA:29767"/>
        <dbReference type="ChEBI" id="CHEBI:15377"/>
        <dbReference type="ChEBI" id="CHEBI:15378"/>
        <dbReference type="ChEBI" id="CHEBI:30616"/>
        <dbReference type="ChEBI" id="CHEBI:43474"/>
        <dbReference type="ChEBI" id="CHEBI:57932"/>
        <dbReference type="ChEBI" id="CHEBI:456216"/>
        <dbReference type="EC" id="7.4.2.11"/>
    </reaction>
</comment>
<comment type="subunit">
    <text evidence="1">The complex is composed of two ATP-binding proteins (MetN), two transmembrane proteins (MetI) and a solute-binding protein (MetQ).</text>
</comment>
<comment type="subcellular location">
    <subcellularLocation>
        <location evidence="1">Cell inner membrane</location>
        <topology evidence="1">Peripheral membrane protein</topology>
    </subcellularLocation>
</comment>
<comment type="similarity">
    <text evidence="1">Belongs to the ABC transporter superfamily. Methionine importer (TC 3.A.1.24) family.</text>
</comment>
<organism>
    <name type="scientific">Pasteurella multocida (strain Pm70)</name>
    <dbReference type="NCBI Taxonomy" id="272843"/>
    <lineage>
        <taxon>Bacteria</taxon>
        <taxon>Pseudomonadati</taxon>
        <taxon>Pseudomonadota</taxon>
        <taxon>Gammaproteobacteria</taxon>
        <taxon>Pasteurellales</taxon>
        <taxon>Pasteurellaceae</taxon>
        <taxon>Pasteurella</taxon>
    </lineage>
</organism>
<accession>Q9CK97</accession>